<reference key="1">
    <citation type="submission" date="2007-06" db="EMBL/GenBank/DDBJ databases">
        <authorList>
            <consortium name="NIH - Mammalian Gene Collection (MGC) project"/>
        </authorList>
    </citation>
    <scope>NUCLEOTIDE SEQUENCE [LARGE SCALE MRNA]</scope>
    <source>
        <strain>Hereford</strain>
        <tissue>Hippocampus</tissue>
    </source>
</reference>
<name>SEGN_BOVIN</name>
<organism>
    <name type="scientific">Bos taurus</name>
    <name type="common">Bovine</name>
    <dbReference type="NCBI Taxonomy" id="9913"/>
    <lineage>
        <taxon>Eukaryota</taxon>
        <taxon>Metazoa</taxon>
        <taxon>Chordata</taxon>
        <taxon>Craniata</taxon>
        <taxon>Vertebrata</taxon>
        <taxon>Euteleostomi</taxon>
        <taxon>Mammalia</taxon>
        <taxon>Eutheria</taxon>
        <taxon>Laurasiatheria</taxon>
        <taxon>Artiodactyla</taxon>
        <taxon>Ruminantia</taxon>
        <taxon>Pecora</taxon>
        <taxon>Bovidae</taxon>
        <taxon>Bovinae</taxon>
        <taxon>Bos</taxon>
    </lineage>
</organism>
<evidence type="ECO:0000250" key="1"/>
<evidence type="ECO:0000255" key="2">
    <source>
        <dbReference type="PROSITE-ProRule" id="PRU00448"/>
    </source>
</evidence>
<sequence>MDSAREPTQGSLDAAGFWQVWQRFDVEEKGYIEEKELDAFFYHMLTKLGVDDAVKEENVQKMKQQFMAPHDVSKDGCIQMKELAGMFLSEDENFLLLFRQETPLDSSVEFMRIWRKYDADSSGFISAAELCNFLRDLFLHHKKAISEAKLEEYTGTMMKIFDKNKDGRLDLNDLARILALQENFLLQFKMDACSSEERKRDFEKIFAHYDVSKTGALEGPEVDGFVKDMMELVQPSIRGVDLDKFREILLRHCDVNKDGKIQKSELALCLGLKINP</sequence>
<comment type="subcellular location">
    <subcellularLocation>
        <location evidence="1">Cytoplasm</location>
    </subcellularLocation>
    <subcellularLocation>
        <location evidence="1">Secreted</location>
    </subcellularLocation>
    <subcellularLocation>
        <location evidence="1">Cytoplasmic vesicle</location>
        <location evidence="1">Secretory vesicle membrane</location>
        <topology evidence="1">Peripheral membrane protein</topology>
        <orientation evidence="1">Cytoplasmic side</orientation>
    </subcellularLocation>
    <text evidence="1">Predominantly cytoplasmic. A small proportion is associated with secretory granules and membrane fractions (By similarity).</text>
</comment>
<protein>
    <recommendedName>
        <fullName>Secretagogin</fullName>
    </recommendedName>
</protein>
<dbReference type="EMBL" id="BC142177">
    <property type="protein sequence ID" value="AAI42178.1"/>
    <property type="molecule type" value="mRNA"/>
</dbReference>
<dbReference type="RefSeq" id="NP_001092643.1">
    <property type="nucleotide sequence ID" value="NM_001099173.1"/>
</dbReference>
<dbReference type="SMR" id="A5PJN0"/>
<dbReference type="FunCoup" id="A5PJN0">
    <property type="interactions" value="10"/>
</dbReference>
<dbReference type="STRING" id="9913.ENSBTAP00000026544"/>
<dbReference type="PaxDb" id="9913-ENSBTAP00000026544"/>
<dbReference type="GeneID" id="618206"/>
<dbReference type="KEGG" id="bta:618206"/>
<dbReference type="CTD" id="10590"/>
<dbReference type="eggNOG" id="KOG0027">
    <property type="taxonomic scope" value="Eukaryota"/>
</dbReference>
<dbReference type="InParanoid" id="A5PJN0"/>
<dbReference type="OrthoDB" id="428774at2759"/>
<dbReference type="Proteomes" id="UP000009136">
    <property type="component" value="Unplaced"/>
</dbReference>
<dbReference type="GO" id="GO:0005829">
    <property type="term" value="C:cytosol"/>
    <property type="evidence" value="ECO:0000318"/>
    <property type="project" value="GO_Central"/>
</dbReference>
<dbReference type="GO" id="GO:0030425">
    <property type="term" value="C:dendrite"/>
    <property type="evidence" value="ECO:0000318"/>
    <property type="project" value="GO_Central"/>
</dbReference>
<dbReference type="GO" id="GO:0005576">
    <property type="term" value="C:extracellular region"/>
    <property type="evidence" value="ECO:0007669"/>
    <property type="project" value="UniProtKB-SubCell"/>
</dbReference>
<dbReference type="GO" id="GO:0005634">
    <property type="term" value="C:nucleus"/>
    <property type="evidence" value="ECO:0000318"/>
    <property type="project" value="GO_Central"/>
</dbReference>
<dbReference type="GO" id="GO:0045202">
    <property type="term" value="C:synapse"/>
    <property type="evidence" value="ECO:0000318"/>
    <property type="project" value="GO_Central"/>
</dbReference>
<dbReference type="GO" id="GO:0043195">
    <property type="term" value="C:terminal bouton"/>
    <property type="evidence" value="ECO:0000318"/>
    <property type="project" value="GO_Central"/>
</dbReference>
<dbReference type="GO" id="GO:0030658">
    <property type="term" value="C:transport vesicle membrane"/>
    <property type="evidence" value="ECO:0007669"/>
    <property type="project" value="UniProtKB-SubCell"/>
</dbReference>
<dbReference type="GO" id="GO:0005509">
    <property type="term" value="F:calcium ion binding"/>
    <property type="evidence" value="ECO:0000318"/>
    <property type="project" value="GO_Central"/>
</dbReference>
<dbReference type="CDD" id="cd16178">
    <property type="entry name" value="EFh_HEF_SCGN"/>
    <property type="match status" value="1"/>
</dbReference>
<dbReference type="FunFam" id="1.10.238.10:FF:000142">
    <property type="entry name" value="Secretagogin"/>
    <property type="match status" value="1"/>
</dbReference>
<dbReference type="FunFam" id="1.10.238.10:FF:000186">
    <property type="entry name" value="Secretagogin"/>
    <property type="match status" value="1"/>
</dbReference>
<dbReference type="FunFam" id="1.10.238.10:FF:000222">
    <property type="entry name" value="Secretagogin"/>
    <property type="match status" value="1"/>
</dbReference>
<dbReference type="Gene3D" id="1.10.238.10">
    <property type="entry name" value="EF-hand"/>
    <property type="match status" value="3"/>
</dbReference>
<dbReference type="InterPro" id="IPR051001">
    <property type="entry name" value="Calbindin_Ca-bind"/>
</dbReference>
<dbReference type="InterPro" id="IPR011992">
    <property type="entry name" value="EF-hand-dom_pair"/>
</dbReference>
<dbReference type="InterPro" id="IPR018247">
    <property type="entry name" value="EF_Hand_1_Ca_BS"/>
</dbReference>
<dbReference type="InterPro" id="IPR002048">
    <property type="entry name" value="EF_hand_dom"/>
</dbReference>
<dbReference type="InterPro" id="IPR035798">
    <property type="entry name" value="EFh_SCGN"/>
</dbReference>
<dbReference type="PANTHER" id="PTHR19972">
    <property type="entry name" value="CALBINDIN"/>
    <property type="match status" value="1"/>
</dbReference>
<dbReference type="PANTHER" id="PTHR19972:SF15">
    <property type="entry name" value="SECRETAGOGIN"/>
    <property type="match status" value="1"/>
</dbReference>
<dbReference type="Pfam" id="PF13202">
    <property type="entry name" value="EF-hand_5"/>
    <property type="match status" value="1"/>
</dbReference>
<dbReference type="Pfam" id="PF13499">
    <property type="entry name" value="EF-hand_7"/>
    <property type="match status" value="1"/>
</dbReference>
<dbReference type="SMART" id="SM00054">
    <property type="entry name" value="EFh"/>
    <property type="match status" value="5"/>
</dbReference>
<dbReference type="SUPFAM" id="SSF47473">
    <property type="entry name" value="EF-hand"/>
    <property type="match status" value="2"/>
</dbReference>
<dbReference type="PROSITE" id="PS00018">
    <property type="entry name" value="EF_HAND_1"/>
    <property type="match status" value="5"/>
</dbReference>
<dbReference type="PROSITE" id="PS50222">
    <property type="entry name" value="EF_HAND_2"/>
    <property type="match status" value="6"/>
</dbReference>
<feature type="chain" id="PRO_0000330624" description="Secretagogin">
    <location>
        <begin position="1"/>
        <end position="276"/>
    </location>
</feature>
<feature type="domain" description="EF-hand 1" evidence="2">
    <location>
        <begin position="12"/>
        <end position="47"/>
    </location>
</feature>
<feature type="domain" description="EF-hand 2" evidence="2">
    <location>
        <begin position="71"/>
        <end position="93"/>
    </location>
</feature>
<feature type="domain" description="EF-hand 3" evidence="2">
    <location>
        <begin position="105"/>
        <end position="140"/>
    </location>
</feature>
<feature type="domain" description="EF-hand 4" evidence="2">
    <location>
        <begin position="149"/>
        <end position="184"/>
    </location>
</feature>
<feature type="domain" description="EF-hand 5" evidence="2">
    <location>
        <begin position="197"/>
        <end position="232"/>
    </location>
</feature>
<feature type="domain" description="EF-hand 6" evidence="2">
    <location>
        <begin position="240"/>
        <end position="276"/>
    </location>
</feature>
<feature type="binding site" evidence="2">
    <location>
        <position position="71"/>
    </location>
    <ligand>
        <name>Ca(2+)</name>
        <dbReference type="ChEBI" id="CHEBI:29108"/>
        <label>1</label>
    </ligand>
</feature>
<feature type="binding site" evidence="2">
    <location>
        <position position="73"/>
    </location>
    <ligand>
        <name>Ca(2+)</name>
        <dbReference type="ChEBI" id="CHEBI:29108"/>
        <label>1</label>
    </ligand>
</feature>
<feature type="binding site" evidence="2">
    <location>
        <position position="75"/>
    </location>
    <ligand>
        <name>Ca(2+)</name>
        <dbReference type="ChEBI" id="CHEBI:29108"/>
        <label>1</label>
    </ligand>
</feature>
<feature type="binding site" evidence="2">
    <location>
        <position position="77"/>
    </location>
    <ligand>
        <name>Ca(2+)</name>
        <dbReference type="ChEBI" id="CHEBI:29108"/>
        <label>1</label>
    </ligand>
</feature>
<feature type="binding site" evidence="2">
    <location>
        <position position="82"/>
    </location>
    <ligand>
        <name>Ca(2+)</name>
        <dbReference type="ChEBI" id="CHEBI:29108"/>
        <label>1</label>
    </ligand>
</feature>
<feature type="binding site" evidence="2">
    <location>
        <position position="118"/>
    </location>
    <ligand>
        <name>Ca(2+)</name>
        <dbReference type="ChEBI" id="CHEBI:29108"/>
        <label>2</label>
    </ligand>
</feature>
<feature type="binding site" evidence="2">
    <location>
        <position position="120"/>
    </location>
    <ligand>
        <name>Ca(2+)</name>
        <dbReference type="ChEBI" id="CHEBI:29108"/>
        <label>2</label>
    </ligand>
</feature>
<feature type="binding site" evidence="2">
    <location>
        <position position="122"/>
    </location>
    <ligand>
        <name>Ca(2+)</name>
        <dbReference type="ChEBI" id="CHEBI:29108"/>
        <label>2</label>
    </ligand>
</feature>
<feature type="binding site" evidence="2">
    <location>
        <position position="129"/>
    </location>
    <ligand>
        <name>Ca(2+)</name>
        <dbReference type="ChEBI" id="CHEBI:29108"/>
        <label>2</label>
    </ligand>
</feature>
<feature type="binding site" evidence="2">
    <location>
        <position position="162"/>
    </location>
    <ligand>
        <name>Ca(2+)</name>
        <dbReference type="ChEBI" id="CHEBI:29108"/>
        <label>3</label>
    </ligand>
</feature>
<feature type="binding site" evidence="2">
    <location>
        <position position="164"/>
    </location>
    <ligand>
        <name>Ca(2+)</name>
        <dbReference type="ChEBI" id="CHEBI:29108"/>
        <label>3</label>
    </ligand>
</feature>
<feature type="binding site" evidence="2">
    <location>
        <position position="166"/>
    </location>
    <ligand>
        <name>Ca(2+)</name>
        <dbReference type="ChEBI" id="CHEBI:29108"/>
        <label>3</label>
    </ligand>
</feature>
<feature type="binding site" evidence="2">
    <location>
        <position position="168"/>
    </location>
    <ligand>
        <name>Ca(2+)</name>
        <dbReference type="ChEBI" id="CHEBI:29108"/>
        <label>3</label>
    </ligand>
</feature>
<feature type="binding site" evidence="2">
    <location>
        <position position="173"/>
    </location>
    <ligand>
        <name>Ca(2+)</name>
        <dbReference type="ChEBI" id="CHEBI:29108"/>
        <label>3</label>
    </ligand>
</feature>
<feature type="binding site" evidence="2">
    <location>
        <position position="210"/>
    </location>
    <ligand>
        <name>Ca(2+)</name>
        <dbReference type="ChEBI" id="CHEBI:29108"/>
        <label>4</label>
    </ligand>
</feature>
<feature type="binding site" evidence="2">
    <location>
        <position position="212"/>
    </location>
    <ligand>
        <name>Ca(2+)</name>
        <dbReference type="ChEBI" id="CHEBI:29108"/>
        <label>4</label>
    </ligand>
</feature>
<feature type="binding site" evidence="2">
    <location>
        <position position="214"/>
    </location>
    <ligand>
        <name>Ca(2+)</name>
        <dbReference type="ChEBI" id="CHEBI:29108"/>
        <label>4</label>
    </ligand>
</feature>
<feature type="binding site" evidence="2">
    <location>
        <position position="221"/>
    </location>
    <ligand>
        <name>Ca(2+)</name>
        <dbReference type="ChEBI" id="CHEBI:29108"/>
        <label>4</label>
    </ligand>
</feature>
<feature type="binding site" evidence="2">
    <location>
        <position position="254"/>
    </location>
    <ligand>
        <name>Ca(2+)</name>
        <dbReference type="ChEBI" id="CHEBI:29108"/>
        <label>5</label>
    </ligand>
</feature>
<feature type="binding site" evidence="2">
    <location>
        <position position="256"/>
    </location>
    <ligand>
        <name>Ca(2+)</name>
        <dbReference type="ChEBI" id="CHEBI:29108"/>
        <label>5</label>
    </ligand>
</feature>
<feature type="binding site" evidence="2">
    <location>
        <position position="258"/>
    </location>
    <ligand>
        <name>Ca(2+)</name>
        <dbReference type="ChEBI" id="CHEBI:29108"/>
        <label>5</label>
    </ligand>
</feature>
<feature type="binding site" evidence="2">
    <location>
        <position position="260"/>
    </location>
    <ligand>
        <name>Ca(2+)</name>
        <dbReference type="ChEBI" id="CHEBI:29108"/>
        <label>5</label>
    </ligand>
</feature>
<feature type="binding site" evidence="2">
    <location>
        <position position="265"/>
    </location>
    <ligand>
        <name>Ca(2+)</name>
        <dbReference type="ChEBI" id="CHEBI:29108"/>
        <label>5</label>
    </ligand>
</feature>
<accession>A5PJN0</accession>
<keyword id="KW-0106">Calcium</keyword>
<keyword id="KW-0963">Cytoplasm</keyword>
<keyword id="KW-0968">Cytoplasmic vesicle</keyword>
<keyword id="KW-0472">Membrane</keyword>
<keyword id="KW-0479">Metal-binding</keyword>
<keyword id="KW-1185">Reference proteome</keyword>
<keyword id="KW-0677">Repeat</keyword>
<keyword id="KW-0964">Secreted</keyword>
<proteinExistence type="evidence at transcript level"/>
<gene>
    <name type="primary">SCGN</name>
</gene>